<name>YEAH_SALHS</name>
<evidence type="ECO:0000255" key="1">
    <source>
        <dbReference type="HAMAP-Rule" id="MF_01232"/>
    </source>
</evidence>
<evidence type="ECO:0000256" key="2">
    <source>
        <dbReference type="SAM" id="MobiDB-lite"/>
    </source>
</evidence>
<dbReference type="EMBL" id="CP001120">
    <property type="protein sequence ID" value="ACF69001.1"/>
    <property type="molecule type" value="Genomic_DNA"/>
</dbReference>
<dbReference type="RefSeq" id="WP_000219714.1">
    <property type="nucleotide sequence ID" value="NC_011083.1"/>
</dbReference>
<dbReference type="SMR" id="B4TFR5"/>
<dbReference type="KEGG" id="seh:SeHA_C1410"/>
<dbReference type="HOGENOM" id="CLU_049702_0_0_6"/>
<dbReference type="Proteomes" id="UP000001866">
    <property type="component" value="Chromosome"/>
</dbReference>
<dbReference type="HAMAP" id="MF_01232">
    <property type="entry name" value="UPF0229"/>
    <property type="match status" value="1"/>
</dbReference>
<dbReference type="InterPro" id="IPR006698">
    <property type="entry name" value="UPF0229"/>
</dbReference>
<dbReference type="NCBIfam" id="NF003707">
    <property type="entry name" value="PRK05325.1-2"/>
    <property type="match status" value="1"/>
</dbReference>
<dbReference type="NCBIfam" id="NF003708">
    <property type="entry name" value="PRK05325.1-3"/>
    <property type="match status" value="1"/>
</dbReference>
<dbReference type="PANTHER" id="PTHR30510">
    <property type="entry name" value="UPF0229 PROTEIN YEAH"/>
    <property type="match status" value="1"/>
</dbReference>
<dbReference type="PANTHER" id="PTHR30510:SF2">
    <property type="entry name" value="UPF0229 PROTEIN YEAH"/>
    <property type="match status" value="1"/>
</dbReference>
<dbReference type="Pfam" id="PF04285">
    <property type="entry name" value="DUF444"/>
    <property type="match status" value="1"/>
</dbReference>
<comment type="similarity">
    <text evidence="1">Belongs to the UPF0229 family.</text>
</comment>
<feature type="chain" id="PRO_1000139655" description="UPF0229 protein YeaH">
    <location>
        <begin position="1"/>
        <end position="428"/>
    </location>
</feature>
<feature type="region of interest" description="Disordered" evidence="2">
    <location>
        <begin position="78"/>
        <end position="111"/>
    </location>
</feature>
<feature type="compositionally biased region" description="Basic and acidic residues" evidence="2">
    <location>
        <begin position="78"/>
        <end position="90"/>
    </location>
</feature>
<feature type="compositionally biased region" description="Gly residues" evidence="2">
    <location>
        <begin position="92"/>
        <end position="103"/>
    </location>
</feature>
<reference key="1">
    <citation type="journal article" date="2011" name="J. Bacteriol.">
        <title>Comparative genomics of 28 Salmonella enterica isolates: evidence for CRISPR-mediated adaptive sublineage evolution.</title>
        <authorList>
            <person name="Fricke W.F."/>
            <person name="Mammel M.K."/>
            <person name="McDermott P.F."/>
            <person name="Tartera C."/>
            <person name="White D.G."/>
            <person name="Leclerc J.E."/>
            <person name="Ravel J."/>
            <person name="Cebula T.A."/>
        </authorList>
    </citation>
    <scope>NUCLEOTIDE SEQUENCE [LARGE SCALE GENOMIC DNA]</scope>
    <source>
        <strain>SL476</strain>
    </source>
</reference>
<gene>
    <name evidence="1" type="primary">yeaH</name>
    <name type="ordered locus">SeHA_C1410</name>
</gene>
<sequence length="428" mass="49515">MTWFIDRRLNGKNKSTVNRQRFLRRYKAQIKQSISEAINKRSVTDVDSGESVSIPTDDISEPMFHQGRGGLRHRVHPGNDHFIQNDRIERPQGGGGGGSGSGQGQASQDGEGQDEFVFQISKDEYLDLLFEDLALPNLKKNQHRQLNEYKTHRAGFTSNGVPANISVVRSLQNSLARRTAMTAGKRRELHALETELETISHSEPAQLLEEERLRREIAELRAKIERVPFIDTFDLRYKNYEKRPEPSSQAVMFCLMDVSGSMDQATKDMAKRFYILLYLFLSRTYKNVEVVYIRHHTQAKEVDEHEFFYSQETGGTIVSSALKLMDEVVKERYDPGQWNIYAAQASDGDNWADDSPLCHEILAKKLLPVVRYYSYIEITRRAHQTLWREYEHLQATFDNFAMQHIRDQEDIYPVFRELFQKQSANQSA</sequence>
<accession>B4TFR5</accession>
<protein>
    <recommendedName>
        <fullName evidence="1">UPF0229 protein YeaH</fullName>
    </recommendedName>
</protein>
<organism>
    <name type="scientific">Salmonella heidelberg (strain SL476)</name>
    <dbReference type="NCBI Taxonomy" id="454169"/>
    <lineage>
        <taxon>Bacteria</taxon>
        <taxon>Pseudomonadati</taxon>
        <taxon>Pseudomonadota</taxon>
        <taxon>Gammaproteobacteria</taxon>
        <taxon>Enterobacterales</taxon>
        <taxon>Enterobacteriaceae</taxon>
        <taxon>Salmonella</taxon>
    </lineage>
</organism>
<proteinExistence type="inferred from homology"/>